<accession>Q9C7J6</accession>
<accession>Q84WQ7</accession>
<accession>Q8LG80</accession>
<sequence>MATDEMKSETKKTEHKQKQSTQIKQDLPPPTIPPLPLPYKSCTLKVSIHCEGCKRKVKKILTSIEGVFKVDIDVKQHKVTVIGIISPEILLKKLNKAGKNAEQLPEIPDPVDNKPKPVDPKEKNKKKKKEEKVQITNEATSSGIDNPEKPGSGECDKPESEKPVDEKCLSGDGGETSGPVKEEKKDVLKEKDSGKEESPSPPADSSAPAAEKKAEDTGGAVPDNGKVGKKKKKKGQSLATTNNPTDGPARTQSLPPPTATDYDRPINQINDHHITTTNNPPRHDLYPYPAQGYYAPQVMYGVSYNVAQPPVSVDAASYYTPPPPYSYAYMHNGYQPSDQNPCQPRPSDSFELFSDENPNGCAIM</sequence>
<protein>
    <recommendedName>
        <fullName evidence="5 6">Heavy metal-associated isoprenylated plant protein 35</fullName>
        <shortName evidence="5 6">AtHIP35</shortName>
    </recommendedName>
</protein>
<name>HIP35_ARATH</name>
<feature type="chain" id="PRO_0000437847" description="Heavy metal-associated isoprenylated plant protein 35">
    <location>
        <begin position="1"/>
        <end position="361"/>
    </location>
</feature>
<feature type="propeptide" id="PRO_0000437848" description="Removed in mature form" evidence="7">
    <location>
        <begin position="362"/>
        <end position="364"/>
    </location>
</feature>
<feature type="domain" description="HMA" evidence="3">
    <location>
        <begin position="39"/>
        <end position="102"/>
    </location>
</feature>
<feature type="region of interest" description="Disordered" evidence="4">
    <location>
        <begin position="1"/>
        <end position="33"/>
    </location>
</feature>
<feature type="region of interest" description="Disordered" evidence="4">
    <location>
        <begin position="101"/>
        <end position="265"/>
    </location>
</feature>
<feature type="compositionally biased region" description="Basic and acidic residues" evidence="4">
    <location>
        <begin position="1"/>
        <end position="12"/>
    </location>
</feature>
<feature type="compositionally biased region" description="Basic and acidic residues" evidence="4">
    <location>
        <begin position="111"/>
        <end position="122"/>
    </location>
</feature>
<feature type="compositionally biased region" description="Polar residues" evidence="4">
    <location>
        <begin position="134"/>
        <end position="144"/>
    </location>
</feature>
<feature type="compositionally biased region" description="Basic and acidic residues" evidence="4">
    <location>
        <begin position="154"/>
        <end position="169"/>
    </location>
</feature>
<feature type="compositionally biased region" description="Basic and acidic residues" evidence="4">
    <location>
        <begin position="180"/>
        <end position="198"/>
    </location>
</feature>
<feature type="compositionally biased region" description="Polar residues" evidence="4">
    <location>
        <begin position="237"/>
        <end position="253"/>
    </location>
</feature>
<feature type="binding site" evidence="3">
    <location>
        <position position="50"/>
    </location>
    <ligand>
        <name>a metal cation</name>
        <dbReference type="ChEBI" id="CHEBI:25213"/>
    </ligand>
</feature>
<feature type="binding site" evidence="3">
    <location>
        <position position="53"/>
    </location>
    <ligand>
        <name>a metal cation</name>
        <dbReference type="ChEBI" id="CHEBI:25213"/>
    </ligand>
</feature>
<feature type="modified residue" description="Cysteine methyl ester" evidence="2">
    <location>
        <position position="361"/>
    </location>
</feature>
<feature type="lipid moiety-binding region" description="S-farnesyl cysteine" evidence="2">
    <location>
        <position position="361"/>
    </location>
</feature>
<feature type="sequence conflict" description="In Ref. 3; AAO22700." evidence="7" ref="3">
    <original>H</original>
    <variation>N</variation>
    <location>
        <position position="273"/>
    </location>
</feature>
<feature type="sequence conflict" description="In Ref. 3; AAO22700." evidence="7" ref="3">
    <original>M</original>
    <variation>V</variation>
    <location>
        <position position="299"/>
    </location>
</feature>
<evidence type="ECO:0000250" key="1">
    <source>
        <dbReference type="UniProtKB" id="Q9LZF1"/>
    </source>
</evidence>
<evidence type="ECO:0000250" key="2">
    <source>
        <dbReference type="UniProtKB" id="Q9SZN7"/>
    </source>
</evidence>
<evidence type="ECO:0000255" key="3">
    <source>
        <dbReference type="PROSITE-ProRule" id="PRU00280"/>
    </source>
</evidence>
<evidence type="ECO:0000256" key="4">
    <source>
        <dbReference type="SAM" id="MobiDB-lite"/>
    </source>
</evidence>
<evidence type="ECO:0000303" key="5">
    <source>
    </source>
</evidence>
<evidence type="ECO:0000303" key="6">
    <source>
    </source>
</evidence>
<evidence type="ECO:0000305" key="7"/>
<evidence type="ECO:0000312" key="8">
    <source>
        <dbReference type="Araport" id="AT1G56210"/>
    </source>
</evidence>
<evidence type="ECO:0000312" key="9">
    <source>
        <dbReference type="EMBL" id="AAG50918.1"/>
    </source>
</evidence>
<comment type="function">
    <text evidence="1">Heavy-metal-binding protein.</text>
</comment>
<comment type="similarity">
    <text evidence="7">Belongs to the HIPP family.</text>
</comment>
<comment type="sequence caution" evidence="7">
    <conflict type="erroneous initiation">
        <sequence resource="EMBL-CDS" id="AAM60991"/>
    </conflict>
    <text>Truncated N-terminus.</text>
</comment>
<keyword id="KW-0449">Lipoprotein</keyword>
<keyword id="KW-0479">Metal-binding</keyword>
<keyword id="KW-0488">Methylation</keyword>
<keyword id="KW-0636">Prenylation</keyword>
<keyword id="KW-1185">Reference proteome</keyword>
<gene>
    <name evidence="5 6" type="primary">HIPP35</name>
    <name evidence="8" type="ordered locus">At1g56210</name>
    <name evidence="9" type="ORF">F14G9.18</name>
</gene>
<dbReference type="EMBL" id="AC069159">
    <property type="protein sequence ID" value="AAG50918.1"/>
    <property type="molecule type" value="Genomic_DNA"/>
</dbReference>
<dbReference type="EMBL" id="CP002684">
    <property type="protein sequence ID" value="AEE33360.1"/>
    <property type="molecule type" value="Genomic_DNA"/>
</dbReference>
<dbReference type="EMBL" id="BT002883">
    <property type="protein sequence ID" value="AAO22700.1"/>
    <property type="molecule type" value="mRNA"/>
</dbReference>
<dbReference type="EMBL" id="BT020412">
    <property type="protein sequence ID" value="AAV97803.1"/>
    <property type="molecule type" value="mRNA"/>
</dbReference>
<dbReference type="EMBL" id="AY084417">
    <property type="protein sequence ID" value="AAM60991.1"/>
    <property type="status" value="ALT_INIT"/>
    <property type="molecule type" value="mRNA"/>
</dbReference>
<dbReference type="PIR" id="F96603">
    <property type="entry name" value="F96603"/>
</dbReference>
<dbReference type="RefSeq" id="NP_564713.1">
    <property type="nucleotide sequence ID" value="NM_104500.3"/>
</dbReference>
<dbReference type="SMR" id="Q9C7J6"/>
<dbReference type="FunCoup" id="Q9C7J6">
    <property type="interactions" value="338"/>
</dbReference>
<dbReference type="STRING" id="3702.Q9C7J6"/>
<dbReference type="PaxDb" id="3702-AT1G56210.1"/>
<dbReference type="ProteomicsDB" id="230348"/>
<dbReference type="EnsemblPlants" id="AT1G56210.1">
    <property type="protein sequence ID" value="AT1G56210.1"/>
    <property type="gene ID" value="AT1G56210"/>
</dbReference>
<dbReference type="GeneID" id="842074"/>
<dbReference type="Gramene" id="AT1G56210.1">
    <property type="protein sequence ID" value="AT1G56210.1"/>
    <property type="gene ID" value="AT1G56210"/>
</dbReference>
<dbReference type="KEGG" id="ath:AT1G56210"/>
<dbReference type="Araport" id="AT1G56210"/>
<dbReference type="TAIR" id="AT1G56210"/>
<dbReference type="eggNOG" id="KOG1603">
    <property type="taxonomic scope" value="Eukaryota"/>
</dbReference>
<dbReference type="HOGENOM" id="CLU_042477_1_0_1"/>
<dbReference type="InParanoid" id="Q9C7J6"/>
<dbReference type="OMA" id="YMHPGYL"/>
<dbReference type="OrthoDB" id="689350at2759"/>
<dbReference type="PRO" id="PR:Q9C7J6"/>
<dbReference type="Proteomes" id="UP000006548">
    <property type="component" value="Chromosome 1"/>
</dbReference>
<dbReference type="ExpressionAtlas" id="Q9C7J6">
    <property type="expression patterns" value="baseline and differential"/>
</dbReference>
<dbReference type="GO" id="GO:0046872">
    <property type="term" value="F:metal ion binding"/>
    <property type="evidence" value="ECO:0007669"/>
    <property type="project" value="UniProtKB-KW"/>
</dbReference>
<dbReference type="CDD" id="cd00371">
    <property type="entry name" value="HMA"/>
    <property type="match status" value="1"/>
</dbReference>
<dbReference type="FunFam" id="3.30.70.100:FF:000008">
    <property type="entry name" value="Copper transport protein ATOX1"/>
    <property type="match status" value="1"/>
</dbReference>
<dbReference type="Gene3D" id="3.30.70.100">
    <property type="match status" value="1"/>
</dbReference>
<dbReference type="InterPro" id="IPR006121">
    <property type="entry name" value="HMA_dom"/>
</dbReference>
<dbReference type="InterPro" id="IPR036163">
    <property type="entry name" value="HMA_dom_sf"/>
</dbReference>
<dbReference type="PANTHER" id="PTHR45868">
    <property type="entry name" value="HEAVY METAL-ASSOCIATED ISOPRENYLATED PLANT PROTEIN 33-RELATED"/>
    <property type="match status" value="1"/>
</dbReference>
<dbReference type="PANTHER" id="PTHR45868:SF69">
    <property type="entry name" value="HEAVY METAL-ASSOCIATED ISOPRENYLATED PLANT PROTEIN 35"/>
    <property type="match status" value="1"/>
</dbReference>
<dbReference type="Pfam" id="PF00403">
    <property type="entry name" value="HMA"/>
    <property type="match status" value="1"/>
</dbReference>
<dbReference type="SUPFAM" id="SSF55008">
    <property type="entry name" value="HMA, heavy metal-associated domain"/>
    <property type="match status" value="1"/>
</dbReference>
<dbReference type="PROSITE" id="PS50846">
    <property type="entry name" value="HMA_2"/>
    <property type="match status" value="1"/>
</dbReference>
<organism>
    <name type="scientific">Arabidopsis thaliana</name>
    <name type="common">Mouse-ear cress</name>
    <dbReference type="NCBI Taxonomy" id="3702"/>
    <lineage>
        <taxon>Eukaryota</taxon>
        <taxon>Viridiplantae</taxon>
        <taxon>Streptophyta</taxon>
        <taxon>Embryophyta</taxon>
        <taxon>Tracheophyta</taxon>
        <taxon>Spermatophyta</taxon>
        <taxon>Magnoliopsida</taxon>
        <taxon>eudicotyledons</taxon>
        <taxon>Gunneridae</taxon>
        <taxon>Pentapetalae</taxon>
        <taxon>rosids</taxon>
        <taxon>malvids</taxon>
        <taxon>Brassicales</taxon>
        <taxon>Brassicaceae</taxon>
        <taxon>Camelineae</taxon>
        <taxon>Arabidopsis</taxon>
    </lineage>
</organism>
<proteinExistence type="evidence at transcript level"/>
<reference key="1">
    <citation type="journal article" date="2000" name="Nature">
        <title>Sequence and analysis of chromosome 1 of the plant Arabidopsis thaliana.</title>
        <authorList>
            <person name="Theologis A."/>
            <person name="Ecker J.R."/>
            <person name="Palm C.J."/>
            <person name="Federspiel N.A."/>
            <person name="Kaul S."/>
            <person name="White O."/>
            <person name="Alonso J."/>
            <person name="Altafi H."/>
            <person name="Araujo R."/>
            <person name="Bowman C.L."/>
            <person name="Brooks S.Y."/>
            <person name="Buehler E."/>
            <person name="Chan A."/>
            <person name="Chao Q."/>
            <person name="Chen H."/>
            <person name="Cheuk R.F."/>
            <person name="Chin C.W."/>
            <person name="Chung M.K."/>
            <person name="Conn L."/>
            <person name="Conway A.B."/>
            <person name="Conway A.R."/>
            <person name="Creasy T.H."/>
            <person name="Dewar K."/>
            <person name="Dunn P."/>
            <person name="Etgu P."/>
            <person name="Feldblyum T.V."/>
            <person name="Feng J.-D."/>
            <person name="Fong B."/>
            <person name="Fujii C.Y."/>
            <person name="Gill J.E."/>
            <person name="Goldsmith A.D."/>
            <person name="Haas B."/>
            <person name="Hansen N.F."/>
            <person name="Hughes B."/>
            <person name="Huizar L."/>
            <person name="Hunter J.L."/>
            <person name="Jenkins J."/>
            <person name="Johnson-Hopson C."/>
            <person name="Khan S."/>
            <person name="Khaykin E."/>
            <person name="Kim C.J."/>
            <person name="Koo H.L."/>
            <person name="Kremenetskaia I."/>
            <person name="Kurtz D.B."/>
            <person name="Kwan A."/>
            <person name="Lam B."/>
            <person name="Langin-Hooper S."/>
            <person name="Lee A."/>
            <person name="Lee J.M."/>
            <person name="Lenz C.A."/>
            <person name="Li J.H."/>
            <person name="Li Y.-P."/>
            <person name="Lin X."/>
            <person name="Liu S.X."/>
            <person name="Liu Z.A."/>
            <person name="Luros J.S."/>
            <person name="Maiti R."/>
            <person name="Marziali A."/>
            <person name="Militscher J."/>
            <person name="Miranda M."/>
            <person name="Nguyen M."/>
            <person name="Nierman W.C."/>
            <person name="Osborne B.I."/>
            <person name="Pai G."/>
            <person name="Peterson J."/>
            <person name="Pham P.K."/>
            <person name="Rizzo M."/>
            <person name="Rooney T."/>
            <person name="Rowley D."/>
            <person name="Sakano H."/>
            <person name="Salzberg S.L."/>
            <person name="Schwartz J.R."/>
            <person name="Shinn P."/>
            <person name="Southwick A.M."/>
            <person name="Sun H."/>
            <person name="Tallon L.J."/>
            <person name="Tambunga G."/>
            <person name="Toriumi M.J."/>
            <person name="Town C.D."/>
            <person name="Utterback T."/>
            <person name="Van Aken S."/>
            <person name="Vaysberg M."/>
            <person name="Vysotskaia V.S."/>
            <person name="Walker M."/>
            <person name="Wu D."/>
            <person name="Yu G."/>
            <person name="Fraser C.M."/>
            <person name="Venter J.C."/>
            <person name="Davis R.W."/>
        </authorList>
    </citation>
    <scope>NUCLEOTIDE SEQUENCE [LARGE SCALE GENOMIC DNA]</scope>
    <source>
        <strain>cv. Columbia</strain>
    </source>
</reference>
<reference key="2">
    <citation type="journal article" date="2017" name="Plant J.">
        <title>Araport11: a complete reannotation of the Arabidopsis thaliana reference genome.</title>
        <authorList>
            <person name="Cheng C.Y."/>
            <person name="Krishnakumar V."/>
            <person name="Chan A.P."/>
            <person name="Thibaud-Nissen F."/>
            <person name="Schobel S."/>
            <person name="Town C.D."/>
        </authorList>
    </citation>
    <scope>GENOME REANNOTATION</scope>
    <source>
        <strain>cv. Columbia</strain>
    </source>
</reference>
<reference key="3">
    <citation type="journal article" date="2003" name="Science">
        <title>Empirical analysis of transcriptional activity in the Arabidopsis genome.</title>
        <authorList>
            <person name="Yamada K."/>
            <person name="Lim J."/>
            <person name="Dale J.M."/>
            <person name="Chen H."/>
            <person name="Shinn P."/>
            <person name="Palm C.J."/>
            <person name="Southwick A.M."/>
            <person name="Wu H.C."/>
            <person name="Kim C.J."/>
            <person name="Nguyen M."/>
            <person name="Pham P.K."/>
            <person name="Cheuk R.F."/>
            <person name="Karlin-Newmann G."/>
            <person name="Liu S.X."/>
            <person name="Lam B."/>
            <person name="Sakano H."/>
            <person name="Wu T."/>
            <person name="Yu G."/>
            <person name="Miranda M."/>
            <person name="Quach H.L."/>
            <person name="Tripp M."/>
            <person name="Chang C.H."/>
            <person name="Lee J.M."/>
            <person name="Toriumi M.J."/>
            <person name="Chan M.M."/>
            <person name="Tang C.C."/>
            <person name="Onodera C.S."/>
            <person name="Deng J.M."/>
            <person name="Akiyama K."/>
            <person name="Ansari Y."/>
            <person name="Arakawa T."/>
            <person name="Banh J."/>
            <person name="Banno F."/>
            <person name="Bowser L."/>
            <person name="Brooks S.Y."/>
            <person name="Carninci P."/>
            <person name="Chao Q."/>
            <person name="Choy N."/>
            <person name="Enju A."/>
            <person name="Goldsmith A.D."/>
            <person name="Gurjal M."/>
            <person name="Hansen N.F."/>
            <person name="Hayashizaki Y."/>
            <person name="Johnson-Hopson C."/>
            <person name="Hsuan V.W."/>
            <person name="Iida K."/>
            <person name="Karnes M."/>
            <person name="Khan S."/>
            <person name="Koesema E."/>
            <person name="Ishida J."/>
            <person name="Jiang P.X."/>
            <person name="Jones T."/>
            <person name="Kawai J."/>
            <person name="Kamiya A."/>
            <person name="Meyers C."/>
            <person name="Nakajima M."/>
            <person name="Narusaka M."/>
            <person name="Seki M."/>
            <person name="Sakurai T."/>
            <person name="Satou M."/>
            <person name="Tamse R."/>
            <person name="Vaysberg M."/>
            <person name="Wallender E.K."/>
            <person name="Wong C."/>
            <person name="Yamamura Y."/>
            <person name="Yuan S."/>
            <person name="Shinozaki K."/>
            <person name="Davis R.W."/>
            <person name="Theologis A."/>
            <person name="Ecker J.R."/>
        </authorList>
    </citation>
    <scope>NUCLEOTIDE SEQUENCE [LARGE SCALE MRNA]</scope>
    <source>
        <strain>cv. Columbia</strain>
    </source>
</reference>
<reference key="4">
    <citation type="submission" date="2004-12" db="EMBL/GenBank/DDBJ databases">
        <title>Arabidopsis ORF clones.</title>
        <authorList>
            <person name="Shinn P."/>
            <person name="Chen H."/>
            <person name="Cheuk R."/>
            <person name="Kim C.J."/>
            <person name="Ecker J.R."/>
        </authorList>
    </citation>
    <scope>NUCLEOTIDE SEQUENCE [LARGE SCALE MRNA]</scope>
    <source>
        <strain>cv. Columbia</strain>
    </source>
</reference>
<reference key="5">
    <citation type="submission" date="2002-03" db="EMBL/GenBank/DDBJ databases">
        <title>Full-length cDNA from Arabidopsis thaliana.</title>
        <authorList>
            <person name="Brover V.V."/>
            <person name="Troukhan M.E."/>
            <person name="Alexandrov N.A."/>
            <person name="Lu Y.-P."/>
            <person name="Flavell R.B."/>
            <person name="Feldmann K.A."/>
        </authorList>
    </citation>
    <scope>NUCLEOTIDE SEQUENCE [LARGE SCALE MRNA]</scope>
</reference>
<reference key="6">
    <citation type="journal article" date="2010" name="Metallomics">
        <title>Metallochaperone-like genes in Arabidopsis thaliana.</title>
        <authorList>
            <person name="Tehseen M."/>
            <person name="Cairns N."/>
            <person name="Sherson S."/>
            <person name="Cobbett C.S."/>
        </authorList>
    </citation>
    <scope>GENE FAMILY</scope>
    <scope>NOMENCLATURE</scope>
</reference>
<reference key="7">
    <citation type="journal article" date="2013" name="FEBS J.">
        <title>Heavy metal-associated isoprenylated plant protein (HIPP): characterization of a family of proteins exclusive to plants.</title>
        <authorList>
            <person name="de Abreu-Neto J.B."/>
            <person name="Turchetto-Zolet A.C."/>
            <person name="de Oliveira L.F."/>
            <person name="Zanettini M.H."/>
            <person name="Margis-Pinheiro M."/>
        </authorList>
    </citation>
    <scope>GENE FAMILY</scope>
    <scope>NOMENCLATURE</scope>
</reference>